<sequence>MSATVEEIADDVQDLNVQEFDSDDAGADVHASDKVASRAERKSRKALQGIGLKKVGGITRVTMRRPRGHLYVIAQPEVYKSSHSDVYIVFGEAKAEDMSQLAQAQAAQQMAQAEAQERLLAESLQNSSASGAEKKVEEEEEDDDSPIDEEGVDAKDIDLVMQQVSCSRRKAVKALKESNGDLINAIMNAS</sequence>
<gene>
    <name type="primary">EGD2</name>
    <name type="ORF">UMAG_05472</name>
</gene>
<feature type="chain" id="PRO_0000273495" description="Nascent polypeptide-associated complex subunit alpha">
    <location>
        <begin position="1"/>
        <end position="190"/>
    </location>
</feature>
<feature type="domain" description="NAC-A/B" evidence="2">
    <location>
        <begin position="37"/>
        <end position="102"/>
    </location>
</feature>
<feature type="domain" description="UBA">
    <location>
        <begin position="152"/>
        <end position="189"/>
    </location>
</feature>
<feature type="region of interest" description="Disordered" evidence="3">
    <location>
        <begin position="20"/>
        <end position="42"/>
    </location>
</feature>
<feature type="region of interest" description="Disordered" evidence="3">
    <location>
        <begin position="123"/>
        <end position="155"/>
    </location>
</feature>
<feature type="compositionally biased region" description="Basic and acidic residues" evidence="3">
    <location>
        <begin position="30"/>
        <end position="40"/>
    </location>
</feature>
<feature type="compositionally biased region" description="Acidic residues" evidence="3">
    <location>
        <begin position="138"/>
        <end position="151"/>
    </location>
</feature>
<comment type="function">
    <text evidence="1">Component of the nascent polypeptide-associated complex (NAC), a dynamic component of the ribosomal exit tunnel, protecting the emerging polypeptides from interaction with other cytoplasmic proteins to ensure appropriate nascent protein targeting. The NAC complex also promotes mitochondrial protein import by enhancing productive ribosome interactions with the outer mitochondrial membrane and blocks the inappropriate interaction of ribosomes translating non-secretory nascent polypeptides with translocation sites in the membrane of the endoplasmic reticulum. EGD2 may also be involved in transcription regulation (By similarity).</text>
</comment>
<comment type="subunit">
    <text evidence="1">Part of the nascent polypeptide-associated complex (NAC), consisting of EGD2 and EGD1. NAC associates with ribosomes via EGD1 (By similarity).</text>
</comment>
<comment type="subcellular location">
    <subcellularLocation>
        <location evidence="1">Cytoplasm</location>
    </subcellularLocation>
    <subcellularLocation>
        <location evidence="1">Nucleus</location>
    </subcellularLocation>
    <text evidence="1">Predominantly cytoplasmic, may also transiently localize to the nucleus.</text>
</comment>
<comment type="similarity">
    <text evidence="4">Belongs to the NAC-alpha family.</text>
</comment>
<name>NACA_MYCMD</name>
<dbReference type="EMBL" id="CM003157">
    <property type="protein sequence ID" value="KIS66478.1"/>
    <property type="molecule type" value="Genomic_DNA"/>
</dbReference>
<dbReference type="RefSeq" id="XP_011391809.1">
    <property type="nucleotide sequence ID" value="XM_011393507.1"/>
</dbReference>
<dbReference type="SMR" id="Q4P341"/>
<dbReference type="FunCoup" id="Q4P341">
    <property type="interactions" value="422"/>
</dbReference>
<dbReference type="STRING" id="237631.Q4P341"/>
<dbReference type="EnsemblFungi" id="KIS66478">
    <property type="protein sequence ID" value="KIS66478"/>
    <property type="gene ID" value="UMAG_05472"/>
</dbReference>
<dbReference type="GeneID" id="23565358"/>
<dbReference type="KEGG" id="uma:UMAG_05472"/>
<dbReference type="VEuPathDB" id="FungiDB:UMAG_05472"/>
<dbReference type="eggNOG" id="KOG2239">
    <property type="taxonomic scope" value="Eukaryota"/>
</dbReference>
<dbReference type="HOGENOM" id="CLU_057806_2_0_1"/>
<dbReference type="InParanoid" id="Q4P341"/>
<dbReference type="OMA" id="SQKMIFA"/>
<dbReference type="OrthoDB" id="3169036at2759"/>
<dbReference type="Proteomes" id="UP000000561">
    <property type="component" value="Chromosome 18"/>
</dbReference>
<dbReference type="GO" id="GO:0005737">
    <property type="term" value="C:cytoplasm"/>
    <property type="evidence" value="ECO:0000318"/>
    <property type="project" value="GO_Central"/>
</dbReference>
<dbReference type="GO" id="GO:0005854">
    <property type="term" value="C:nascent polypeptide-associated complex"/>
    <property type="evidence" value="ECO:0007669"/>
    <property type="project" value="EnsemblFungi"/>
</dbReference>
<dbReference type="GO" id="GO:0005634">
    <property type="term" value="C:nucleus"/>
    <property type="evidence" value="ECO:0007669"/>
    <property type="project" value="UniProtKB-SubCell"/>
</dbReference>
<dbReference type="GO" id="GO:0070300">
    <property type="term" value="F:phosphatidic acid binding"/>
    <property type="evidence" value="ECO:0007669"/>
    <property type="project" value="EnsemblFungi"/>
</dbReference>
<dbReference type="GO" id="GO:0080025">
    <property type="term" value="F:phosphatidylinositol-3,5-bisphosphate binding"/>
    <property type="evidence" value="ECO:0007669"/>
    <property type="project" value="EnsemblFungi"/>
</dbReference>
<dbReference type="GO" id="GO:0032266">
    <property type="term" value="F:phosphatidylinositol-3-phosphate binding"/>
    <property type="evidence" value="ECO:0007669"/>
    <property type="project" value="EnsemblFungi"/>
</dbReference>
<dbReference type="GO" id="GO:0070273">
    <property type="term" value="F:phosphatidylinositol-4-phosphate binding"/>
    <property type="evidence" value="ECO:0007669"/>
    <property type="project" value="EnsemblFungi"/>
</dbReference>
<dbReference type="GO" id="GO:0051082">
    <property type="term" value="F:unfolded protein binding"/>
    <property type="evidence" value="ECO:0000318"/>
    <property type="project" value="GO_Central"/>
</dbReference>
<dbReference type="GO" id="GO:0006613">
    <property type="term" value="P:cotranslational protein targeting to membrane"/>
    <property type="evidence" value="ECO:0007669"/>
    <property type="project" value="EnsemblFungi"/>
</dbReference>
<dbReference type="GO" id="GO:0006612">
    <property type="term" value="P:protein targeting to membrane"/>
    <property type="evidence" value="ECO:0000318"/>
    <property type="project" value="GO_Central"/>
</dbReference>
<dbReference type="GO" id="GO:0015031">
    <property type="term" value="P:protein transport"/>
    <property type="evidence" value="ECO:0007669"/>
    <property type="project" value="UniProtKB-KW"/>
</dbReference>
<dbReference type="CDD" id="cd22054">
    <property type="entry name" value="NAC_NACA"/>
    <property type="match status" value="1"/>
</dbReference>
<dbReference type="CDD" id="cd14358">
    <property type="entry name" value="UBA_NAC_euk"/>
    <property type="match status" value="1"/>
</dbReference>
<dbReference type="Gene3D" id="1.10.8.10">
    <property type="entry name" value="DNA helicase RuvA subunit, C-terminal domain"/>
    <property type="match status" value="1"/>
</dbReference>
<dbReference type="Gene3D" id="2.20.70.30">
    <property type="entry name" value="Nascent polypeptide-associated complex domain"/>
    <property type="match status" value="1"/>
</dbReference>
<dbReference type="InterPro" id="IPR016641">
    <property type="entry name" value="EGD2/NACA0like"/>
</dbReference>
<dbReference type="InterPro" id="IPR044034">
    <property type="entry name" value="NAC-like_UBA"/>
</dbReference>
<dbReference type="InterPro" id="IPR038187">
    <property type="entry name" value="NAC_A/B_dom_sf"/>
</dbReference>
<dbReference type="InterPro" id="IPR002715">
    <property type="entry name" value="Nas_poly-pep-assoc_cplx_dom"/>
</dbReference>
<dbReference type="PANTHER" id="PTHR21713">
    <property type="entry name" value="NASCENT POLYPEPTIDE ASSOCIATED COMPLEX ALPHA SUBUNIT-RELATED"/>
    <property type="match status" value="1"/>
</dbReference>
<dbReference type="Pfam" id="PF01849">
    <property type="entry name" value="NAC"/>
    <property type="match status" value="1"/>
</dbReference>
<dbReference type="Pfam" id="PF19026">
    <property type="entry name" value="UBA_HYPK"/>
    <property type="match status" value="1"/>
</dbReference>
<dbReference type="PIRSF" id="PIRSF015901">
    <property type="entry name" value="NAC_alpha"/>
    <property type="match status" value="1"/>
</dbReference>
<dbReference type="SMART" id="SM01407">
    <property type="entry name" value="NAC"/>
    <property type="match status" value="1"/>
</dbReference>
<dbReference type="PROSITE" id="PS51151">
    <property type="entry name" value="NAC_AB"/>
    <property type="match status" value="1"/>
</dbReference>
<evidence type="ECO:0000250" key="1"/>
<evidence type="ECO:0000255" key="2">
    <source>
        <dbReference type="PROSITE-ProRule" id="PRU00507"/>
    </source>
</evidence>
<evidence type="ECO:0000256" key="3">
    <source>
        <dbReference type="SAM" id="MobiDB-lite"/>
    </source>
</evidence>
<evidence type="ECO:0000305" key="4"/>
<reference key="1">
    <citation type="journal article" date="2006" name="Nature">
        <title>Insights from the genome of the biotrophic fungal plant pathogen Ustilago maydis.</title>
        <authorList>
            <person name="Kaemper J."/>
            <person name="Kahmann R."/>
            <person name="Boelker M."/>
            <person name="Ma L.-J."/>
            <person name="Brefort T."/>
            <person name="Saville B.J."/>
            <person name="Banuett F."/>
            <person name="Kronstad J.W."/>
            <person name="Gold S.E."/>
            <person name="Mueller O."/>
            <person name="Perlin M.H."/>
            <person name="Woesten H.A.B."/>
            <person name="de Vries R."/>
            <person name="Ruiz-Herrera J."/>
            <person name="Reynaga-Pena C.G."/>
            <person name="Snetselaar K."/>
            <person name="McCann M."/>
            <person name="Perez-Martin J."/>
            <person name="Feldbruegge M."/>
            <person name="Basse C.W."/>
            <person name="Steinberg G."/>
            <person name="Ibeas J.I."/>
            <person name="Holloman W."/>
            <person name="Guzman P."/>
            <person name="Farman M.L."/>
            <person name="Stajich J.E."/>
            <person name="Sentandreu R."/>
            <person name="Gonzalez-Prieto J.M."/>
            <person name="Kennell J.C."/>
            <person name="Molina L."/>
            <person name="Schirawski J."/>
            <person name="Mendoza-Mendoza A."/>
            <person name="Greilinger D."/>
            <person name="Muench K."/>
            <person name="Roessel N."/>
            <person name="Scherer M."/>
            <person name="Vranes M."/>
            <person name="Ladendorf O."/>
            <person name="Vincon V."/>
            <person name="Fuchs U."/>
            <person name="Sandrock B."/>
            <person name="Meng S."/>
            <person name="Ho E.C.H."/>
            <person name="Cahill M.J."/>
            <person name="Boyce K.J."/>
            <person name="Klose J."/>
            <person name="Klosterman S.J."/>
            <person name="Deelstra H.J."/>
            <person name="Ortiz-Castellanos L."/>
            <person name="Li W."/>
            <person name="Sanchez-Alonso P."/>
            <person name="Schreier P.H."/>
            <person name="Haeuser-Hahn I."/>
            <person name="Vaupel M."/>
            <person name="Koopmann E."/>
            <person name="Friedrich G."/>
            <person name="Voss H."/>
            <person name="Schlueter T."/>
            <person name="Margolis J."/>
            <person name="Platt D."/>
            <person name="Swimmer C."/>
            <person name="Gnirke A."/>
            <person name="Chen F."/>
            <person name="Vysotskaia V."/>
            <person name="Mannhaupt G."/>
            <person name="Gueldener U."/>
            <person name="Muensterkoetter M."/>
            <person name="Haase D."/>
            <person name="Oesterheld M."/>
            <person name="Mewes H.-W."/>
            <person name="Mauceli E.W."/>
            <person name="DeCaprio D."/>
            <person name="Wade C.M."/>
            <person name="Butler J."/>
            <person name="Young S.K."/>
            <person name="Jaffe D.B."/>
            <person name="Calvo S.E."/>
            <person name="Nusbaum C."/>
            <person name="Galagan J.E."/>
            <person name="Birren B.W."/>
        </authorList>
    </citation>
    <scope>NUCLEOTIDE SEQUENCE [LARGE SCALE GENOMIC DNA]</scope>
    <source>
        <strain>DSM 14603 / FGSC 9021 / UM521</strain>
    </source>
</reference>
<reference key="2">
    <citation type="submission" date="2014-09" db="EMBL/GenBank/DDBJ databases">
        <authorList>
            <person name="Gueldener U."/>
            <person name="Muensterkoetter M."/>
            <person name="Walter M.C."/>
            <person name="Mannhaupt G."/>
            <person name="Kahmann R."/>
        </authorList>
    </citation>
    <scope>GENOME REANNOTATION</scope>
    <source>
        <strain>DSM 14603 / FGSC 9021 / UM521</strain>
    </source>
</reference>
<accession>Q4P341</accession>
<accession>A0A0D1CHP3</accession>
<organism>
    <name type="scientific">Mycosarcoma maydis</name>
    <name type="common">Corn smut fungus</name>
    <name type="synonym">Ustilago maydis</name>
    <dbReference type="NCBI Taxonomy" id="5270"/>
    <lineage>
        <taxon>Eukaryota</taxon>
        <taxon>Fungi</taxon>
        <taxon>Dikarya</taxon>
        <taxon>Basidiomycota</taxon>
        <taxon>Ustilaginomycotina</taxon>
        <taxon>Ustilaginomycetes</taxon>
        <taxon>Ustilaginales</taxon>
        <taxon>Ustilaginaceae</taxon>
        <taxon>Mycosarcoma</taxon>
    </lineage>
</organism>
<keyword id="KW-0963">Cytoplasm</keyword>
<keyword id="KW-0539">Nucleus</keyword>
<keyword id="KW-0653">Protein transport</keyword>
<keyword id="KW-1185">Reference proteome</keyword>
<keyword id="KW-0813">Transport</keyword>
<protein>
    <recommendedName>
        <fullName>Nascent polypeptide-associated complex subunit alpha</fullName>
        <shortName>NAC-alpha</shortName>
    </recommendedName>
    <alternativeName>
        <fullName>Alpha-NAC</fullName>
    </alternativeName>
</protein>
<proteinExistence type="inferred from homology"/>